<accession>A0QCW7</accession>
<sequence>MTQPVQTIDVLLAEHADLERRLSDPDLHSNPDEARKAGRRFARLAPIVGTYRKLMAAREDLETARELAADDDSFTAEVADLESRVAQLDTQLTDMLAPRDSHDADDIVLEVKSGEGGEESALFAADLARMYIRYAERHGWTVTVLDEITSDLGGYKDATLSIRSKGDSADGVWSRMKFEGGVHRVQRVPVTESQGRVHTSAAGVLVYPEPEEVAEVQIDESDLRIDVFRSSGKGGQGVNTTDSAVRITHLPTGVVVTCQNERSQLQNKARALQVLAARLQAMAEEQASAEASADRASQIRTVDRSERIRTYNFPENRITDHRIGFKAHNLDQVLDGDLDALFDALAAADKQSRLQQA</sequence>
<gene>
    <name evidence="1" type="primary">prfA</name>
    <name type="ordered locus">MAV_1516</name>
</gene>
<protein>
    <recommendedName>
        <fullName evidence="1">Peptide chain release factor 1</fullName>
        <shortName evidence="1">RF-1</shortName>
    </recommendedName>
</protein>
<proteinExistence type="inferred from homology"/>
<comment type="function">
    <text evidence="1">Peptide chain release factor 1 directs the termination of translation in response to the peptide chain termination codons UAG and UAA.</text>
</comment>
<comment type="subcellular location">
    <subcellularLocation>
        <location evidence="1">Cytoplasm</location>
    </subcellularLocation>
</comment>
<comment type="PTM">
    <text evidence="1">Methylated by PrmC. Methylation increases the termination efficiency of RF1.</text>
</comment>
<comment type="similarity">
    <text evidence="1">Belongs to the prokaryotic/mitochondrial release factor family.</text>
</comment>
<reference key="1">
    <citation type="submission" date="2006-10" db="EMBL/GenBank/DDBJ databases">
        <authorList>
            <person name="Fleischmann R.D."/>
            <person name="Dodson R.J."/>
            <person name="Haft D.H."/>
            <person name="Merkel J.S."/>
            <person name="Nelson W.C."/>
            <person name="Fraser C.M."/>
        </authorList>
    </citation>
    <scope>NUCLEOTIDE SEQUENCE [LARGE SCALE GENOMIC DNA]</scope>
    <source>
        <strain>104</strain>
    </source>
</reference>
<evidence type="ECO:0000255" key="1">
    <source>
        <dbReference type="HAMAP-Rule" id="MF_00093"/>
    </source>
</evidence>
<feature type="chain" id="PRO_1000004913" description="Peptide chain release factor 1">
    <location>
        <begin position="1"/>
        <end position="357"/>
    </location>
</feature>
<feature type="modified residue" description="N5-methylglutamine" evidence="1">
    <location>
        <position position="236"/>
    </location>
</feature>
<keyword id="KW-0963">Cytoplasm</keyword>
<keyword id="KW-0488">Methylation</keyword>
<keyword id="KW-0648">Protein biosynthesis</keyword>
<name>RF1_MYCA1</name>
<organism>
    <name type="scientific">Mycobacterium avium (strain 104)</name>
    <dbReference type="NCBI Taxonomy" id="243243"/>
    <lineage>
        <taxon>Bacteria</taxon>
        <taxon>Bacillati</taxon>
        <taxon>Actinomycetota</taxon>
        <taxon>Actinomycetes</taxon>
        <taxon>Mycobacteriales</taxon>
        <taxon>Mycobacteriaceae</taxon>
        <taxon>Mycobacterium</taxon>
        <taxon>Mycobacterium avium complex (MAC)</taxon>
    </lineage>
</organism>
<dbReference type="EMBL" id="CP000479">
    <property type="protein sequence ID" value="ABK66936.1"/>
    <property type="molecule type" value="Genomic_DNA"/>
</dbReference>
<dbReference type="RefSeq" id="WP_011724201.1">
    <property type="nucleotide sequence ID" value="NC_008595.1"/>
</dbReference>
<dbReference type="SMR" id="A0QCW7"/>
<dbReference type="KEGG" id="mav:MAV_1516"/>
<dbReference type="HOGENOM" id="CLU_036856_0_1_11"/>
<dbReference type="Proteomes" id="UP000001574">
    <property type="component" value="Chromosome"/>
</dbReference>
<dbReference type="GO" id="GO:0005737">
    <property type="term" value="C:cytoplasm"/>
    <property type="evidence" value="ECO:0007669"/>
    <property type="project" value="UniProtKB-SubCell"/>
</dbReference>
<dbReference type="GO" id="GO:0016149">
    <property type="term" value="F:translation release factor activity, codon specific"/>
    <property type="evidence" value="ECO:0007669"/>
    <property type="project" value="UniProtKB-UniRule"/>
</dbReference>
<dbReference type="FunFam" id="3.30.160.20:FF:000004">
    <property type="entry name" value="Peptide chain release factor 1"/>
    <property type="match status" value="1"/>
</dbReference>
<dbReference type="Gene3D" id="3.30.160.20">
    <property type="match status" value="1"/>
</dbReference>
<dbReference type="Gene3D" id="3.30.70.1660">
    <property type="match status" value="1"/>
</dbReference>
<dbReference type="Gene3D" id="6.10.140.1950">
    <property type="match status" value="1"/>
</dbReference>
<dbReference type="HAMAP" id="MF_00093">
    <property type="entry name" value="Rel_fac_1"/>
    <property type="match status" value="1"/>
</dbReference>
<dbReference type="InterPro" id="IPR005139">
    <property type="entry name" value="PCRF"/>
</dbReference>
<dbReference type="InterPro" id="IPR000352">
    <property type="entry name" value="Pep_chain_release_fac_I"/>
</dbReference>
<dbReference type="InterPro" id="IPR045853">
    <property type="entry name" value="Pep_chain_release_fac_I_sf"/>
</dbReference>
<dbReference type="InterPro" id="IPR050057">
    <property type="entry name" value="Prokaryotic/Mito_RF"/>
</dbReference>
<dbReference type="InterPro" id="IPR004373">
    <property type="entry name" value="RF-1"/>
</dbReference>
<dbReference type="NCBIfam" id="TIGR00019">
    <property type="entry name" value="prfA"/>
    <property type="match status" value="1"/>
</dbReference>
<dbReference type="NCBIfam" id="NF001859">
    <property type="entry name" value="PRK00591.1"/>
    <property type="match status" value="1"/>
</dbReference>
<dbReference type="PANTHER" id="PTHR43804">
    <property type="entry name" value="LD18447P"/>
    <property type="match status" value="1"/>
</dbReference>
<dbReference type="PANTHER" id="PTHR43804:SF7">
    <property type="entry name" value="LD18447P"/>
    <property type="match status" value="1"/>
</dbReference>
<dbReference type="Pfam" id="PF03462">
    <property type="entry name" value="PCRF"/>
    <property type="match status" value="1"/>
</dbReference>
<dbReference type="Pfam" id="PF00472">
    <property type="entry name" value="RF-1"/>
    <property type="match status" value="1"/>
</dbReference>
<dbReference type="SMART" id="SM00937">
    <property type="entry name" value="PCRF"/>
    <property type="match status" value="1"/>
</dbReference>
<dbReference type="SUPFAM" id="SSF75620">
    <property type="entry name" value="Release factor"/>
    <property type="match status" value="1"/>
</dbReference>
<dbReference type="PROSITE" id="PS00745">
    <property type="entry name" value="RF_PROK_I"/>
    <property type="match status" value="1"/>
</dbReference>